<organism>
    <name type="scientific">Neisseria meningitidis serogroup C (strain 053442)</name>
    <dbReference type="NCBI Taxonomy" id="374833"/>
    <lineage>
        <taxon>Bacteria</taxon>
        <taxon>Pseudomonadati</taxon>
        <taxon>Pseudomonadota</taxon>
        <taxon>Betaproteobacteria</taxon>
        <taxon>Neisseriales</taxon>
        <taxon>Neisseriaceae</taxon>
        <taxon>Neisseria</taxon>
    </lineage>
</organism>
<dbReference type="EC" id="1.2.1.70" evidence="1"/>
<dbReference type="EMBL" id="CP000381">
    <property type="protein sequence ID" value="ABX72722.1"/>
    <property type="molecule type" value="Genomic_DNA"/>
</dbReference>
<dbReference type="RefSeq" id="WP_012221360.1">
    <property type="nucleotide sequence ID" value="NC_010120.1"/>
</dbReference>
<dbReference type="SMR" id="A9M2B8"/>
<dbReference type="KEGG" id="nmn:NMCC_0522"/>
<dbReference type="HOGENOM" id="CLU_035113_2_2_4"/>
<dbReference type="UniPathway" id="UPA00251">
    <property type="reaction ID" value="UER00316"/>
</dbReference>
<dbReference type="Proteomes" id="UP000001177">
    <property type="component" value="Chromosome"/>
</dbReference>
<dbReference type="GO" id="GO:0008883">
    <property type="term" value="F:glutamyl-tRNA reductase activity"/>
    <property type="evidence" value="ECO:0007669"/>
    <property type="project" value="UniProtKB-UniRule"/>
</dbReference>
<dbReference type="GO" id="GO:0050661">
    <property type="term" value="F:NADP binding"/>
    <property type="evidence" value="ECO:0007669"/>
    <property type="project" value="InterPro"/>
</dbReference>
<dbReference type="GO" id="GO:0019353">
    <property type="term" value="P:protoporphyrinogen IX biosynthetic process from glutamate"/>
    <property type="evidence" value="ECO:0007669"/>
    <property type="project" value="TreeGrafter"/>
</dbReference>
<dbReference type="CDD" id="cd05213">
    <property type="entry name" value="NAD_bind_Glutamyl_tRNA_reduct"/>
    <property type="match status" value="1"/>
</dbReference>
<dbReference type="FunFam" id="3.30.460.30:FF:000001">
    <property type="entry name" value="Glutamyl-tRNA reductase"/>
    <property type="match status" value="1"/>
</dbReference>
<dbReference type="FunFam" id="3.40.50.720:FF:000031">
    <property type="entry name" value="Glutamyl-tRNA reductase"/>
    <property type="match status" value="1"/>
</dbReference>
<dbReference type="Gene3D" id="3.30.460.30">
    <property type="entry name" value="Glutamyl-tRNA reductase, N-terminal domain"/>
    <property type="match status" value="1"/>
</dbReference>
<dbReference type="Gene3D" id="3.40.50.720">
    <property type="entry name" value="NAD(P)-binding Rossmann-like Domain"/>
    <property type="match status" value="1"/>
</dbReference>
<dbReference type="HAMAP" id="MF_00087">
    <property type="entry name" value="Glu_tRNA_reductase"/>
    <property type="match status" value="1"/>
</dbReference>
<dbReference type="InterPro" id="IPR000343">
    <property type="entry name" value="4pyrrol_synth_GluRdtase"/>
</dbReference>
<dbReference type="InterPro" id="IPR015896">
    <property type="entry name" value="4pyrrol_synth_GluRdtase_dimer"/>
</dbReference>
<dbReference type="InterPro" id="IPR015895">
    <property type="entry name" value="4pyrrol_synth_GluRdtase_N"/>
</dbReference>
<dbReference type="InterPro" id="IPR018214">
    <property type="entry name" value="GluRdtase_CS"/>
</dbReference>
<dbReference type="InterPro" id="IPR036453">
    <property type="entry name" value="GluRdtase_dimer_dom_sf"/>
</dbReference>
<dbReference type="InterPro" id="IPR036343">
    <property type="entry name" value="GluRdtase_N_sf"/>
</dbReference>
<dbReference type="InterPro" id="IPR036291">
    <property type="entry name" value="NAD(P)-bd_dom_sf"/>
</dbReference>
<dbReference type="InterPro" id="IPR006151">
    <property type="entry name" value="Shikm_DH/Glu-tRNA_Rdtase"/>
</dbReference>
<dbReference type="NCBIfam" id="TIGR01035">
    <property type="entry name" value="hemA"/>
    <property type="match status" value="1"/>
</dbReference>
<dbReference type="PANTHER" id="PTHR43013">
    <property type="entry name" value="GLUTAMYL-TRNA REDUCTASE"/>
    <property type="match status" value="1"/>
</dbReference>
<dbReference type="PANTHER" id="PTHR43013:SF1">
    <property type="entry name" value="GLUTAMYL-TRNA REDUCTASE"/>
    <property type="match status" value="1"/>
</dbReference>
<dbReference type="Pfam" id="PF00745">
    <property type="entry name" value="GlutR_dimer"/>
    <property type="match status" value="1"/>
</dbReference>
<dbReference type="Pfam" id="PF05201">
    <property type="entry name" value="GlutR_N"/>
    <property type="match status" value="1"/>
</dbReference>
<dbReference type="Pfam" id="PF01488">
    <property type="entry name" value="Shikimate_DH"/>
    <property type="match status" value="1"/>
</dbReference>
<dbReference type="PIRSF" id="PIRSF000445">
    <property type="entry name" value="4pyrrol_synth_GluRdtase"/>
    <property type="match status" value="1"/>
</dbReference>
<dbReference type="SUPFAM" id="SSF69742">
    <property type="entry name" value="Glutamyl tRNA-reductase catalytic, N-terminal domain"/>
    <property type="match status" value="1"/>
</dbReference>
<dbReference type="SUPFAM" id="SSF69075">
    <property type="entry name" value="Glutamyl tRNA-reductase dimerization domain"/>
    <property type="match status" value="1"/>
</dbReference>
<dbReference type="SUPFAM" id="SSF51735">
    <property type="entry name" value="NAD(P)-binding Rossmann-fold domains"/>
    <property type="match status" value="1"/>
</dbReference>
<dbReference type="PROSITE" id="PS00747">
    <property type="entry name" value="GLUTR"/>
    <property type="match status" value="1"/>
</dbReference>
<gene>
    <name evidence="1" type="primary">hemA</name>
    <name type="ordered locus">NMCC_0522</name>
</gene>
<proteinExistence type="inferred from homology"/>
<feature type="chain" id="PRO_1000075415" description="Glutamyl-tRNA reductase">
    <location>
        <begin position="1"/>
        <end position="415"/>
    </location>
</feature>
<feature type="active site" description="Nucleophile" evidence="1">
    <location>
        <position position="50"/>
    </location>
</feature>
<feature type="binding site" evidence="1">
    <location>
        <begin position="49"/>
        <end position="52"/>
    </location>
    <ligand>
        <name>substrate</name>
    </ligand>
</feature>
<feature type="binding site" evidence="1">
    <location>
        <position position="104"/>
    </location>
    <ligand>
        <name>substrate</name>
    </ligand>
</feature>
<feature type="binding site" evidence="1">
    <location>
        <begin position="109"/>
        <end position="111"/>
    </location>
    <ligand>
        <name>substrate</name>
    </ligand>
</feature>
<feature type="binding site" evidence="1">
    <location>
        <position position="115"/>
    </location>
    <ligand>
        <name>substrate</name>
    </ligand>
</feature>
<feature type="binding site" evidence="1">
    <location>
        <begin position="184"/>
        <end position="189"/>
    </location>
    <ligand>
        <name>NADP(+)</name>
        <dbReference type="ChEBI" id="CHEBI:58349"/>
    </ligand>
</feature>
<feature type="site" description="Important for activity" evidence="1">
    <location>
        <position position="94"/>
    </location>
</feature>
<reference key="1">
    <citation type="journal article" date="2008" name="Genomics">
        <title>Characterization of ST-4821 complex, a unique Neisseria meningitidis clone.</title>
        <authorList>
            <person name="Peng J."/>
            <person name="Yang L."/>
            <person name="Yang F."/>
            <person name="Yang J."/>
            <person name="Yan Y."/>
            <person name="Nie H."/>
            <person name="Zhang X."/>
            <person name="Xiong Z."/>
            <person name="Jiang Y."/>
            <person name="Cheng F."/>
            <person name="Xu X."/>
            <person name="Chen S."/>
            <person name="Sun L."/>
            <person name="Li W."/>
            <person name="Shen Y."/>
            <person name="Shao Z."/>
            <person name="Liang X."/>
            <person name="Xu J."/>
            <person name="Jin Q."/>
        </authorList>
    </citation>
    <scope>NUCLEOTIDE SEQUENCE [LARGE SCALE GENOMIC DNA]</scope>
    <source>
        <strain>053442</strain>
    </source>
</reference>
<sequence>MQLTAVGLNHQTAPLSIREKLAFAAACLPEAVRNLARSNAATEAVILSTCNRTELYCVGDSEEIIRWLADYHSLPIEEISPYLYTLGMQETVRHAFRVACGLDSMVLGEPQILGQIKDAVRVAQEQESMGKKLNALFQKTFSVAKEIRTDTAVGENSVSMASASVKLAEQIFPDIGDLNVLFIGAGEMIELVATYFAAKSPRLMTVANRTLARAQELCDKLGVNAEPCLLSDLPAILHEYDVVVSSTASQLPIVGKGMVERALKQRQSMPLFMLDLAVPRDIEAEVGDLNDAYLYTVDDMVNIVQSGKEARQKAAAAAETLVSEKVAEFVRQQQGRQSVPLIRALRDEGEKARKQVLENAMKQLAKGATAEEVLERLSIQLTNKLLHSPTQTLNKAGEEDKDLVHAVAQIYHLDK</sequence>
<evidence type="ECO:0000255" key="1">
    <source>
        <dbReference type="HAMAP-Rule" id="MF_00087"/>
    </source>
</evidence>
<accession>A9M2B8</accession>
<keyword id="KW-0521">NADP</keyword>
<keyword id="KW-0560">Oxidoreductase</keyword>
<keyword id="KW-0627">Porphyrin biosynthesis</keyword>
<protein>
    <recommendedName>
        <fullName evidence="1">Glutamyl-tRNA reductase</fullName>
        <shortName evidence="1">GluTR</shortName>
        <ecNumber evidence="1">1.2.1.70</ecNumber>
    </recommendedName>
</protein>
<comment type="function">
    <text evidence="1">Catalyzes the NADPH-dependent reduction of glutamyl-tRNA(Glu) to glutamate 1-semialdehyde (GSA).</text>
</comment>
<comment type="catalytic activity">
    <reaction evidence="1">
        <text>(S)-4-amino-5-oxopentanoate + tRNA(Glu) + NADP(+) = L-glutamyl-tRNA(Glu) + NADPH + H(+)</text>
        <dbReference type="Rhea" id="RHEA:12344"/>
        <dbReference type="Rhea" id="RHEA-COMP:9663"/>
        <dbReference type="Rhea" id="RHEA-COMP:9680"/>
        <dbReference type="ChEBI" id="CHEBI:15378"/>
        <dbReference type="ChEBI" id="CHEBI:57501"/>
        <dbReference type="ChEBI" id="CHEBI:57783"/>
        <dbReference type="ChEBI" id="CHEBI:58349"/>
        <dbReference type="ChEBI" id="CHEBI:78442"/>
        <dbReference type="ChEBI" id="CHEBI:78520"/>
        <dbReference type="EC" id="1.2.1.70"/>
    </reaction>
</comment>
<comment type="pathway">
    <text evidence="1">Porphyrin-containing compound metabolism; protoporphyrin-IX biosynthesis; 5-aminolevulinate from L-glutamyl-tRNA(Glu): step 1/2.</text>
</comment>
<comment type="subunit">
    <text evidence="1">Homodimer.</text>
</comment>
<comment type="domain">
    <text evidence="1">Possesses an unusual extended V-shaped dimeric structure with each monomer consisting of three distinct domains arranged along a curved 'spinal' alpha-helix. The N-terminal catalytic domain specifically recognizes the glutamate moiety of the substrate. The second domain is the NADPH-binding domain, and the third C-terminal domain is responsible for dimerization.</text>
</comment>
<comment type="miscellaneous">
    <text evidence="1">During catalysis, the active site Cys acts as a nucleophile attacking the alpha-carbonyl group of tRNA-bound glutamate with the formation of a thioester intermediate between enzyme and glutamate, and the concomitant release of tRNA(Glu). The thioester intermediate is finally reduced by direct hydride transfer from NADPH, to form the product GSA.</text>
</comment>
<comment type="similarity">
    <text evidence="1">Belongs to the glutamyl-tRNA reductase family.</text>
</comment>
<name>HEM1_NEIM0</name>